<proteinExistence type="evidence at protein level"/>
<sequence length="445" mass="49249">METRTEDGGLTRRPTLASSWDVAGGALTHSLLLTRAGLGPGDFDWEELLAPPAPGQDLVILKRNHNNKDENPCFLYLRCGPDGGEEIASIGILSSARNMEVYLGEEYCGTSRGKNVCTVLDDSEHEKIILYKKNLKLESSTHACKIKLLSFGERQCVFISKVVVHMRSVFANSSTSSPALGSRIDLDKVQTIMESMGSKLSPGAQQLMDMVRCQQRNCIPIGEQLQSVLGNSGYKHMIGLQSSSTLGTLNKSSSTPFPFRTGLTSGNVTENLQTYIDKSTQLPGGENSTKLDECKVMPQNHSFLENDLKNAMASFLPKKVSDNSNIPNSELLPFLQNLCSQVNHLHVGNKTECQENITKHGERILGVGMEEQSICSYLEKILSKNMELMEKKLMDYIDQRIHELQEHIDDKIALLLDLLQNPNSPPTGIPLRHYDSGERLSNGER</sequence>
<keyword id="KW-0963">Cytoplasm</keyword>
<keyword id="KW-0378">Hydrolase</keyword>
<keyword id="KW-0496">Mitochondrion</keyword>
<keyword id="KW-0597">Phosphoprotein</keyword>
<keyword id="KW-1267">Proteomics identification</keyword>
<keyword id="KW-1185">Reference proteome</keyword>
<dbReference type="EC" id="3.6.1.-" evidence="2"/>
<dbReference type="EMBL" id="AK023552">
    <property type="protein sequence ID" value="BAB14609.1"/>
    <property type="molecule type" value="mRNA"/>
</dbReference>
<dbReference type="EMBL" id="BC032645">
    <property type="protein sequence ID" value="AAH32645.1"/>
    <property type="molecule type" value="mRNA"/>
</dbReference>
<dbReference type="CCDS" id="CCDS7632.1"/>
<dbReference type="RefSeq" id="NP_079218.2">
    <property type="nucleotide sequence ID" value="NM_024942.3"/>
</dbReference>
<dbReference type="SMR" id="Q9H8K7"/>
<dbReference type="BioGRID" id="123064">
    <property type="interactions" value="144"/>
</dbReference>
<dbReference type="FunCoup" id="Q9H8K7">
    <property type="interactions" value="2010"/>
</dbReference>
<dbReference type="IntAct" id="Q9H8K7">
    <property type="interactions" value="116"/>
</dbReference>
<dbReference type="STRING" id="9606.ENSP00000419126"/>
<dbReference type="GlyGen" id="Q9H8K7">
    <property type="glycosylation" value="1 site, 1 O-linked glycan (1 site)"/>
</dbReference>
<dbReference type="iPTMnet" id="Q9H8K7"/>
<dbReference type="PhosphoSitePlus" id="Q9H8K7"/>
<dbReference type="BioMuta" id="C10orf88"/>
<dbReference type="DMDM" id="118572224"/>
<dbReference type="jPOST" id="Q9H8K7"/>
<dbReference type="MassIVE" id="Q9H8K7"/>
<dbReference type="PaxDb" id="9606-ENSP00000419126"/>
<dbReference type="PeptideAtlas" id="Q9H8K7"/>
<dbReference type="ProteomicsDB" id="81215"/>
<dbReference type="Pumba" id="Q9H8K7"/>
<dbReference type="Antibodypedia" id="32320">
    <property type="antibodies" value="60 antibodies from 14 providers"/>
</dbReference>
<dbReference type="DNASU" id="80007"/>
<dbReference type="Ensembl" id="ENST00000481909.2">
    <property type="protein sequence ID" value="ENSP00000419126.1"/>
    <property type="gene ID" value="ENSG00000119965.13"/>
</dbReference>
<dbReference type="GeneID" id="80007"/>
<dbReference type="KEGG" id="hsa:80007"/>
<dbReference type="MANE-Select" id="ENST00000481909.2">
    <property type="protein sequence ID" value="ENSP00000419126.1"/>
    <property type="RefSeq nucleotide sequence ID" value="NM_024942.4"/>
    <property type="RefSeq protein sequence ID" value="NP_079218.2"/>
</dbReference>
<dbReference type="UCSC" id="uc001lgw.3">
    <property type="organism name" value="human"/>
</dbReference>
<dbReference type="AGR" id="HGNC:25822"/>
<dbReference type="CTD" id="80007"/>
<dbReference type="DisGeNET" id="80007"/>
<dbReference type="GeneCards" id="C10orf88"/>
<dbReference type="HGNC" id="HGNC:25822">
    <property type="gene designation" value="C10orf88"/>
</dbReference>
<dbReference type="HPA" id="ENSG00000119965">
    <property type="expression patterns" value="Low tissue specificity"/>
</dbReference>
<dbReference type="MIM" id="620661">
    <property type="type" value="gene"/>
</dbReference>
<dbReference type="neXtProt" id="NX_Q9H8K7"/>
<dbReference type="OpenTargets" id="ENSG00000119965"/>
<dbReference type="PharmGKB" id="PA134993933"/>
<dbReference type="VEuPathDB" id="HostDB:ENSG00000119965"/>
<dbReference type="eggNOG" id="ENOG502RUU4">
    <property type="taxonomic scope" value="Eukaryota"/>
</dbReference>
<dbReference type="GeneTree" id="ENSGT00390000017384"/>
<dbReference type="HOGENOM" id="CLU_053533_0_0_1"/>
<dbReference type="InParanoid" id="Q9H8K7"/>
<dbReference type="OMA" id="PMLQNVC"/>
<dbReference type="OrthoDB" id="5981473at2759"/>
<dbReference type="PAN-GO" id="Q9H8K7">
    <property type="GO annotations" value="0 GO annotations based on evolutionary models"/>
</dbReference>
<dbReference type="PhylomeDB" id="Q9H8K7"/>
<dbReference type="TreeFam" id="TF333208"/>
<dbReference type="PathwayCommons" id="Q9H8K7"/>
<dbReference type="SignaLink" id="Q9H8K7"/>
<dbReference type="BioGRID-ORCS" id="80007">
    <property type="hits" value="18 hits in 1133 CRISPR screens"/>
</dbReference>
<dbReference type="ChiTaRS" id="C10orf88">
    <property type="organism name" value="human"/>
</dbReference>
<dbReference type="GenomeRNAi" id="80007"/>
<dbReference type="Pharos" id="Q9H8K7">
    <property type="development level" value="Tdark"/>
</dbReference>
<dbReference type="PRO" id="PR:Q9H8K7"/>
<dbReference type="Proteomes" id="UP000005640">
    <property type="component" value="Chromosome 10"/>
</dbReference>
<dbReference type="RNAct" id="Q9H8K7">
    <property type="molecule type" value="protein"/>
</dbReference>
<dbReference type="Bgee" id="ENSG00000119965">
    <property type="expression patterns" value="Expressed in primordial germ cell in gonad and 168 other cell types or tissues"/>
</dbReference>
<dbReference type="GO" id="GO:0005737">
    <property type="term" value="C:cytoplasm"/>
    <property type="evidence" value="ECO:0000314"/>
    <property type="project" value="UniProtKB"/>
</dbReference>
<dbReference type="GO" id="GO:0005739">
    <property type="term" value="C:mitochondrion"/>
    <property type="evidence" value="ECO:0000314"/>
    <property type="project" value="UniProtKB"/>
</dbReference>
<dbReference type="GO" id="GO:0016887">
    <property type="term" value="F:ATP hydrolysis activity"/>
    <property type="evidence" value="ECO:0000314"/>
    <property type="project" value="UniProtKB"/>
</dbReference>
<dbReference type="GO" id="GO:0042802">
    <property type="term" value="F:identical protein binding"/>
    <property type="evidence" value="ECO:0007669"/>
    <property type="project" value="Ensembl"/>
</dbReference>
<dbReference type="InterPro" id="IPR028043">
    <property type="entry name" value="PAAT-like"/>
</dbReference>
<dbReference type="PANTHER" id="PTHR14787:SF1">
    <property type="entry name" value="ATPASE PAAT"/>
    <property type="match status" value="1"/>
</dbReference>
<dbReference type="PANTHER" id="PTHR14787">
    <property type="entry name" value="C10ORF188 FAMILY MEMBER"/>
    <property type="match status" value="1"/>
</dbReference>
<dbReference type="Pfam" id="PF14958">
    <property type="entry name" value="PAAT-like"/>
    <property type="match status" value="1"/>
</dbReference>
<dbReference type="PROSITE" id="PS00211">
    <property type="entry name" value="ABC_TRANSPORTER_1"/>
    <property type="match status" value="1"/>
</dbReference>
<feature type="chain" id="PRO_0000260085" description="ATPase PAAT">
    <location>
        <begin position="1"/>
        <end position="445"/>
    </location>
</feature>
<feature type="region of interest" description="Disordered" evidence="1">
    <location>
        <begin position="426"/>
        <end position="445"/>
    </location>
</feature>
<feature type="compositionally biased region" description="Basic and acidic residues" evidence="1">
    <location>
        <begin position="432"/>
        <end position="445"/>
    </location>
</feature>
<feature type="modified residue" description="Phosphoserine" evidence="6">
    <location>
        <position position="177"/>
    </location>
</feature>
<feature type="modified residue" description="Phosphoserine" evidence="6">
    <location>
        <position position="182"/>
    </location>
</feature>
<feature type="modified residue" description="Phosphoserine" evidence="6">
    <location>
        <position position="254"/>
    </location>
</feature>
<feature type="modified residue" description="Phosphoserine" evidence="6">
    <location>
        <position position="302"/>
    </location>
</feature>
<feature type="sequence conflict" description="In Ref. 1; BAB14609." evidence="4" ref="1">
    <original>N</original>
    <variation>D</variation>
    <location>
        <position position="67"/>
    </location>
</feature>
<gene>
    <name evidence="3" type="primary">PAAT</name>
    <name evidence="5" type="synonym">C10orf88</name>
</gene>
<comment type="function">
    <text evidence="2">ATPase that regulates mitochondrial ABC transporters ABCB7, ABCB8/MITOSUR and ABCB10 (PubMed:25063848). Regulates mitochondrial ferric concentration and heme biosynthesis and plays a role in the maintenance of mitochondrial homeostasis and cell survival (PubMed:25063848).</text>
</comment>
<comment type="catalytic activity">
    <reaction evidence="2">
        <text>ATP + H2O = ADP + phosphate + H(+)</text>
        <dbReference type="Rhea" id="RHEA:13065"/>
        <dbReference type="ChEBI" id="CHEBI:15377"/>
        <dbReference type="ChEBI" id="CHEBI:15378"/>
        <dbReference type="ChEBI" id="CHEBI:30616"/>
        <dbReference type="ChEBI" id="CHEBI:43474"/>
        <dbReference type="ChEBI" id="CHEBI:456216"/>
    </reaction>
    <physiologicalReaction direction="left-to-right" evidence="2">
        <dbReference type="Rhea" id="RHEA:13066"/>
    </physiologicalReaction>
</comment>
<comment type="subunit">
    <text evidence="2">Homodimer (PubMed:25063848). Interacts with ABCB7, ABCB8/MITOSUR and ABCB10 (PubMed:25063848).</text>
</comment>
<comment type="interaction">
    <interactant intactId="EBI-714785">
        <id>Q9H8K7</id>
    </interactant>
    <interactant intactId="EBI-718729">
        <id>P55212</id>
        <label>CASP6</label>
    </interactant>
    <organismsDiffer>false</organismsDiffer>
    <experiments>3</experiments>
</comment>
<comment type="interaction">
    <interactant intactId="EBI-714785">
        <id>Q9H8K7</id>
    </interactant>
    <interactant intactId="EBI-25837549">
        <id>P28329-3</id>
        <label>CHAT</label>
    </interactant>
    <organismsDiffer>false</organismsDiffer>
    <experiments>3</experiments>
</comment>
<comment type="interaction">
    <interactant intactId="EBI-714785">
        <id>Q9H8K7</id>
    </interactant>
    <interactant intactId="EBI-354967">
        <id>Q00610</id>
        <label>CLTC</label>
    </interactant>
    <organismsDiffer>false</organismsDiffer>
    <experiments>5</experiments>
</comment>
<comment type="interaction">
    <interactant intactId="EBI-714785">
        <id>Q9H8K7</id>
    </interactant>
    <interactant intactId="EBI-348399">
        <id>P22607</id>
        <label>FGFR3</label>
    </interactant>
    <organismsDiffer>false</organismsDiffer>
    <experiments>3</experiments>
</comment>
<comment type="interaction">
    <interactant intactId="EBI-714785">
        <id>Q9H8K7</id>
    </interactant>
    <interactant intactId="EBI-351506">
        <id>P06396</id>
        <label>GSN</label>
    </interactant>
    <organismsDiffer>false</organismsDiffer>
    <experiments>3</experiments>
</comment>
<comment type="interaction">
    <interactant intactId="EBI-714785">
        <id>Q9H8K7</id>
    </interactant>
    <interactant intactId="EBI-7116203">
        <id>O75031</id>
        <label>HSF2BP</label>
    </interactant>
    <organismsDiffer>false</organismsDiffer>
    <experiments>3</experiments>
</comment>
<comment type="interaction">
    <interactant intactId="EBI-714785">
        <id>Q9H8K7</id>
    </interactant>
    <interactant intactId="EBI-739832">
        <id>Q8TBB1</id>
        <label>LNX1</label>
    </interactant>
    <organismsDiffer>false</organismsDiffer>
    <experiments>5</experiments>
</comment>
<comment type="interaction">
    <interactant intactId="EBI-714785">
        <id>Q9H8K7</id>
    </interactant>
    <interactant intactId="EBI-2340947">
        <id>Q8N448</id>
        <label>LNX2</label>
    </interactant>
    <organismsDiffer>false</organismsDiffer>
    <experiments>3</experiments>
</comment>
<comment type="interaction">
    <interactant intactId="EBI-714785">
        <id>Q9H8K7</id>
    </interactant>
    <interactant intactId="EBI-16439278">
        <id>Q6FHY5</id>
        <label>MEOX2</label>
    </interactant>
    <organismsDiffer>false</organismsDiffer>
    <experiments>3</experiments>
</comment>
<comment type="interaction">
    <interactant intactId="EBI-714785">
        <id>Q9H8K7</id>
    </interactant>
    <interactant intactId="EBI-2692890">
        <id>Q96KN3</id>
        <label>PKNOX2</label>
    </interactant>
    <organismsDiffer>false</organismsDiffer>
    <experiments>3</experiments>
</comment>
<comment type="interaction">
    <interactant intactId="EBI-714785">
        <id>Q9H8K7</id>
    </interactant>
    <interactant intactId="EBI-286642">
        <id>P62826</id>
        <label>RAN</label>
    </interactant>
    <organismsDiffer>false</organismsDiffer>
    <experiments>3</experiments>
</comment>
<comment type="subcellular location">
    <subcellularLocation>
        <location evidence="2">Cytoplasm</location>
    </subcellularLocation>
    <subcellularLocation>
        <location evidence="2">Mitochondrion</location>
    </subcellularLocation>
</comment>
<name>PAAT_HUMAN</name>
<evidence type="ECO:0000256" key="1">
    <source>
        <dbReference type="SAM" id="MobiDB-lite"/>
    </source>
</evidence>
<evidence type="ECO:0000269" key="2">
    <source>
    </source>
</evidence>
<evidence type="ECO:0000303" key="3">
    <source>
    </source>
</evidence>
<evidence type="ECO:0000305" key="4"/>
<evidence type="ECO:0000312" key="5">
    <source>
        <dbReference type="HGNC" id="HGNC:25822"/>
    </source>
</evidence>
<evidence type="ECO:0007744" key="6">
    <source>
    </source>
</evidence>
<accession>Q9H8K7</accession>
<accession>Q0P6C6</accession>
<accession>Q8N597</accession>
<reference key="1">
    <citation type="journal article" date="2004" name="Nat. Genet.">
        <title>Complete sequencing and characterization of 21,243 full-length human cDNAs.</title>
        <authorList>
            <person name="Ota T."/>
            <person name="Suzuki Y."/>
            <person name="Nishikawa T."/>
            <person name="Otsuki T."/>
            <person name="Sugiyama T."/>
            <person name="Irie R."/>
            <person name="Wakamatsu A."/>
            <person name="Hayashi K."/>
            <person name="Sato H."/>
            <person name="Nagai K."/>
            <person name="Kimura K."/>
            <person name="Makita H."/>
            <person name="Sekine M."/>
            <person name="Obayashi M."/>
            <person name="Nishi T."/>
            <person name="Shibahara T."/>
            <person name="Tanaka T."/>
            <person name="Ishii S."/>
            <person name="Yamamoto J."/>
            <person name="Saito K."/>
            <person name="Kawai Y."/>
            <person name="Isono Y."/>
            <person name="Nakamura Y."/>
            <person name="Nagahari K."/>
            <person name="Murakami K."/>
            <person name="Yasuda T."/>
            <person name="Iwayanagi T."/>
            <person name="Wagatsuma M."/>
            <person name="Shiratori A."/>
            <person name="Sudo H."/>
            <person name="Hosoiri T."/>
            <person name="Kaku Y."/>
            <person name="Kodaira H."/>
            <person name="Kondo H."/>
            <person name="Sugawara M."/>
            <person name="Takahashi M."/>
            <person name="Kanda K."/>
            <person name="Yokoi T."/>
            <person name="Furuya T."/>
            <person name="Kikkawa E."/>
            <person name="Omura Y."/>
            <person name="Abe K."/>
            <person name="Kamihara K."/>
            <person name="Katsuta N."/>
            <person name="Sato K."/>
            <person name="Tanikawa M."/>
            <person name="Yamazaki M."/>
            <person name="Ninomiya K."/>
            <person name="Ishibashi T."/>
            <person name="Yamashita H."/>
            <person name="Murakawa K."/>
            <person name="Fujimori K."/>
            <person name="Tanai H."/>
            <person name="Kimata M."/>
            <person name="Watanabe M."/>
            <person name="Hiraoka S."/>
            <person name="Chiba Y."/>
            <person name="Ishida S."/>
            <person name="Ono Y."/>
            <person name="Takiguchi S."/>
            <person name="Watanabe S."/>
            <person name="Yosida M."/>
            <person name="Hotuta T."/>
            <person name="Kusano J."/>
            <person name="Kanehori K."/>
            <person name="Takahashi-Fujii A."/>
            <person name="Hara H."/>
            <person name="Tanase T.-O."/>
            <person name="Nomura Y."/>
            <person name="Togiya S."/>
            <person name="Komai F."/>
            <person name="Hara R."/>
            <person name="Takeuchi K."/>
            <person name="Arita M."/>
            <person name="Imose N."/>
            <person name="Musashino K."/>
            <person name="Yuuki H."/>
            <person name="Oshima A."/>
            <person name="Sasaki N."/>
            <person name="Aotsuka S."/>
            <person name="Yoshikawa Y."/>
            <person name="Matsunawa H."/>
            <person name="Ichihara T."/>
            <person name="Shiohata N."/>
            <person name="Sano S."/>
            <person name="Moriya S."/>
            <person name="Momiyama H."/>
            <person name="Satoh N."/>
            <person name="Takami S."/>
            <person name="Terashima Y."/>
            <person name="Suzuki O."/>
            <person name="Nakagawa S."/>
            <person name="Senoh A."/>
            <person name="Mizoguchi H."/>
            <person name="Goto Y."/>
            <person name="Shimizu F."/>
            <person name="Wakebe H."/>
            <person name="Hishigaki H."/>
            <person name="Watanabe T."/>
            <person name="Sugiyama A."/>
            <person name="Takemoto M."/>
            <person name="Kawakami B."/>
            <person name="Yamazaki M."/>
            <person name="Watanabe K."/>
            <person name="Kumagai A."/>
            <person name="Itakura S."/>
            <person name="Fukuzumi Y."/>
            <person name="Fujimori Y."/>
            <person name="Komiyama M."/>
            <person name="Tashiro H."/>
            <person name="Tanigami A."/>
            <person name="Fujiwara T."/>
            <person name="Ono T."/>
            <person name="Yamada K."/>
            <person name="Fujii Y."/>
            <person name="Ozaki K."/>
            <person name="Hirao M."/>
            <person name="Ohmori Y."/>
            <person name="Kawabata A."/>
            <person name="Hikiji T."/>
            <person name="Kobatake N."/>
            <person name="Inagaki H."/>
            <person name="Ikema Y."/>
            <person name="Okamoto S."/>
            <person name="Okitani R."/>
            <person name="Kawakami T."/>
            <person name="Noguchi S."/>
            <person name="Itoh T."/>
            <person name="Shigeta K."/>
            <person name="Senba T."/>
            <person name="Matsumura K."/>
            <person name="Nakajima Y."/>
            <person name="Mizuno T."/>
            <person name="Morinaga M."/>
            <person name="Sasaki M."/>
            <person name="Togashi T."/>
            <person name="Oyama M."/>
            <person name="Hata H."/>
            <person name="Watanabe M."/>
            <person name="Komatsu T."/>
            <person name="Mizushima-Sugano J."/>
            <person name="Satoh T."/>
            <person name="Shirai Y."/>
            <person name="Takahashi Y."/>
            <person name="Nakagawa K."/>
            <person name="Okumura K."/>
            <person name="Nagase T."/>
            <person name="Nomura N."/>
            <person name="Kikuchi H."/>
            <person name="Masuho Y."/>
            <person name="Yamashita R."/>
            <person name="Nakai K."/>
            <person name="Yada T."/>
            <person name="Nakamura Y."/>
            <person name="Ohara O."/>
            <person name="Isogai T."/>
            <person name="Sugano S."/>
        </authorList>
    </citation>
    <scope>NUCLEOTIDE SEQUENCE [LARGE SCALE MRNA]</scope>
    <source>
        <tissue>Placenta</tissue>
    </source>
</reference>
<reference key="2">
    <citation type="journal article" date="2004" name="Genome Res.">
        <title>The status, quality, and expansion of the NIH full-length cDNA project: the Mammalian Gene Collection (MGC).</title>
        <authorList>
            <consortium name="The MGC Project Team"/>
        </authorList>
    </citation>
    <scope>NUCLEOTIDE SEQUENCE [LARGE SCALE MRNA]</scope>
    <source>
        <tissue>Testis</tissue>
        <tissue>Uterus</tissue>
    </source>
</reference>
<reference key="3">
    <citation type="journal article" date="2009" name="Sci. Signal.">
        <title>Quantitative phosphoproteomic analysis of T cell receptor signaling reveals system-wide modulation of protein-protein interactions.</title>
        <authorList>
            <person name="Mayya V."/>
            <person name="Lundgren D.H."/>
            <person name="Hwang S.-I."/>
            <person name="Rezaul K."/>
            <person name="Wu L."/>
            <person name="Eng J.K."/>
            <person name="Rodionov V."/>
            <person name="Han D.K."/>
        </authorList>
    </citation>
    <scope>IDENTIFICATION BY MASS SPECTROMETRY [LARGE SCALE ANALYSIS]</scope>
    <source>
        <tissue>Leukemic T-cell</tissue>
    </source>
</reference>
<reference key="4">
    <citation type="journal article" date="2013" name="J. Proteome Res.">
        <title>Toward a comprehensive characterization of a human cancer cell phosphoproteome.</title>
        <authorList>
            <person name="Zhou H."/>
            <person name="Di Palma S."/>
            <person name="Preisinger C."/>
            <person name="Peng M."/>
            <person name="Polat A.N."/>
            <person name="Heck A.J."/>
            <person name="Mohammed S."/>
        </authorList>
    </citation>
    <scope>PHOSPHORYLATION [LARGE SCALE ANALYSIS] AT SER-177; SER-182; SER-254 AND SER-302</scope>
    <scope>IDENTIFICATION BY MASS SPECTROMETRY [LARGE SCALE ANALYSIS]</scope>
    <source>
        <tissue>Erythroleukemia</tissue>
    </source>
</reference>
<reference key="5">
    <citation type="journal article" date="2014" name="FASEB J.">
        <title>PAAT, a novel ATPase and trans-regulator of mitochondrial ABC transporters, is critically involved in the maintenance of mitochondrial homeostasis.</title>
        <authorList>
            <person name="Yang X."/>
            <person name="Yang J."/>
            <person name="Li L."/>
            <person name="Sun L."/>
            <person name="Yi X."/>
            <person name="Han X."/>
            <person name="Si W."/>
            <person name="Yan R."/>
            <person name="Chen Z."/>
            <person name="Xie G."/>
            <person name="Li W."/>
            <person name="Shang Y."/>
            <person name="Liang J."/>
        </authorList>
    </citation>
    <scope>FUNCTION</scope>
    <scope>SUBCELLULAR LOCATION</scope>
    <scope>SUBUNIT</scope>
    <scope>INTERACTION WITH ABCB7; ABCB8/MITOSUR AND ABCB10</scope>
</reference>
<organism>
    <name type="scientific">Homo sapiens</name>
    <name type="common">Human</name>
    <dbReference type="NCBI Taxonomy" id="9606"/>
    <lineage>
        <taxon>Eukaryota</taxon>
        <taxon>Metazoa</taxon>
        <taxon>Chordata</taxon>
        <taxon>Craniata</taxon>
        <taxon>Vertebrata</taxon>
        <taxon>Euteleostomi</taxon>
        <taxon>Mammalia</taxon>
        <taxon>Eutheria</taxon>
        <taxon>Euarchontoglires</taxon>
        <taxon>Primates</taxon>
        <taxon>Haplorrhini</taxon>
        <taxon>Catarrhini</taxon>
        <taxon>Hominidae</taxon>
        <taxon>Homo</taxon>
    </lineage>
</organism>
<protein>
    <recommendedName>
        <fullName evidence="4">ATPase PAAT</fullName>
        <ecNumber evidence="2">3.6.1.-</ecNumber>
    </recommendedName>
    <alternativeName>
        <fullName evidence="3">Protein associated with ABC transporters</fullName>
        <shortName evidence="3">PAAT</shortName>
    </alternativeName>
</protein>